<keyword id="KW-0903">Direct protein sequencing</keyword>
<keyword id="KW-1015">Disulfide bond</keyword>
<keyword id="KW-0339">Growth factor</keyword>
<keyword id="KW-1185">Reference proteome</keyword>
<keyword id="KW-0964">Secreted</keyword>
<keyword id="KW-0732">Signal</keyword>
<name>NRTN_MOUSE</name>
<reference key="1">
    <citation type="journal article" date="1996" name="Nature">
        <title>Neurturin, a relative of glial-cell-line-derived neurotrophic factor.</title>
        <authorList>
            <person name="Kotzbauer P.T."/>
            <person name="Lampe P.A."/>
            <person name="Heuckeroth R.O."/>
            <person name="Golden J.P."/>
            <person name="Creedon D.J."/>
            <person name="Johnson E.M. Jr."/>
            <person name="Milbrandt J."/>
        </authorList>
    </citation>
    <scope>NUCLEOTIDE SEQUENCE [MRNA]</scope>
    <scope>PROTEIN SEQUENCE OF 96-110; 127-135; 155-177 AND 181-190</scope>
    <scope>FUNCTION</scope>
    <scope>SUBUNIT</scope>
    <scope>SUBCELLULAR LOCATION</scope>
    <scope>TISSUE SPECIFICITY</scope>
</reference>
<reference key="2">
    <citation type="journal article" date="2004" name="Genome Res.">
        <title>The status, quality, and expansion of the NIH full-length cDNA project: the Mammalian Gene Collection (MGC).</title>
        <authorList>
            <consortium name="The MGC Project Team"/>
        </authorList>
    </citation>
    <scope>NUCLEOTIDE SEQUENCE [LARGE SCALE MRNA]</scope>
    <source>
        <strain>FVB/N</strain>
        <tissue>Mammary tumor</tissue>
    </source>
</reference>
<proteinExistence type="evidence at protein level"/>
<feature type="signal peptide" evidence="2">
    <location>
        <begin position="1"/>
        <end position="19"/>
    </location>
</feature>
<feature type="propeptide" id="PRO_0000034012" evidence="6">
    <location>
        <begin position="20"/>
        <end position="95"/>
    </location>
</feature>
<feature type="chain" id="PRO_0000034013" description="Neurturin" evidence="6">
    <location>
        <begin position="96"/>
        <end position="195"/>
    </location>
</feature>
<feature type="binding site" evidence="1">
    <location>
        <position position="147"/>
    </location>
    <ligand>
        <name>heparan sulfate group</name>
        <dbReference type="ChEBI" id="CHEBI:157750"/>
    </ligand>
</feature>
<feature type="binding site" evidence="1">
    <location>
        <position position="156"/>
    </location>
    <ligand>
        <name>heparan sulfate group</name>
        <dbReference type="ChEBI" id="CHEBI:157750"/>
    </ligand>
</feature>
<feature type="binding site" evidence="1">
    <location>
        <position position="158"/>
    </location>
    <ligand>
        <name>heparan sulfate group</name>
        <dbReference type="ChEBI" id="CHEBI:157750"/>
    </ligand>
</feature>
<feature type="disulfide bond" evidence="1">
    <location>
        <begin position="101"/>
        <end position="163"/>
    </location>
</feature>
<feature type="disulfide bond" evidence="1">
    <location>
        <begin position="128"/>
        <end position="192"/>
    </location>
</feature>
<feature type="disulfide bond" evidence="1">
    <location>
        <begin position="132"/>
        <end position="194"/>
    </location>
</feature>
<feature type="disulfide bond" description="Interchain" evidence="1">
    <location>
        <position position="162"/>
    </location>
</feature>
<organism>
    <name type="scientific">Mus musculus</name>
    <name type="common">Mouse</name>
    <dbReference type="NCBI Taxonomy" id="10090"/>
    <lineage>
        <taxon>Eukaryota</taxon>
        <taxon>Metazoa</taxon>
        <taxon>Chordata</taxon>
        <taxon>Craniata</taxon>
        <taxon>Vertebrata</taxon>
        <taxon>Euteleostomi</taxon>
        <taxon>Mammalia</taxon>
        <taxon>Eutheria</taxon>
        <taxon>Euarchontoglires</taxon>
        <taxon>Glires</taxon>
        <taxon>Rodentia</taxon>
        <taxon>Myomorpha</taxon>
        <taxon>Muroidea</taxon>
        <taxon>Muridae</taxon>
        <taxon>Murinae</taxon>
        <taxon>Mus</taxon>
        <taxon>Mus</taxon>
    </lineage>
</organism>
<gene>
    <name type="primary">Nrtn</name>
</gene>
<evidence type="ECO:0000250" key="1">
    <source>
        <dbReference type="UniProtKB" id="Q99748"/>
    </source>
</evidence>
<evidence type="ECO:0000255" key="2"/>
<evidence type="ECO:0000269" key="3">
    <source>
    </source>
</evidence>
<evidence type="ECO:0000303" key="4">
    <source>
    </source>
</evidence>
<evidence type="ECO:0000305" key="5"/>
<evidence type="ECO:0000305" key="6">
    <source>
    </source>
</evidence>
<accession>P97463</accession>
<protein>
    <recommendedName>
        <fullName evidence="4">Neurturin</fullName>
    </recommendedName>
</protein>
<comment type="function">
    <text evidence="1 3">Growth factor that supports the survival of sympathetic neurons in culture (PubMed:8945474). May regulate the development and maintenance of the CNS (PubMed:8945474). Involved in the development of the neural crest (By similarity). Might control the size of non-neuronal cell population such as haemopoietic cells (PubMed:8945474). Acts by binding to its coreceptor, GFRA2, leading to autophosphorylation and activation of the RET receptor (By similarity). Heparan sulfate-binding is required for signaling (By similarity).</text>
</comment>
<comment type="subunit">
    <text evidence="1 3">Homodimer; disulfide-linked (PubMed:8945474). Interacts with GFRA2 coreceptor and RET: forms a 2:2:2 ternary complex composed of NRTN ligand, GFRA2 and RET receptor. Also forms a 4:4:4 tetrameric complex composed of 4 copies of NRTN ligand, GFRA2 and RET receptor, which prevents endocytosis of RET (By similarity).</text>
</comment>
<comment type="subcellular location">
    <subcellularLocation>
        <location evidence="3">Secreted</location>
    </subcellularLocation>
</comment>
<comment type="tissue specificity">
    <text evidence="3">Widespread distribution.</text>
</comment>
<comment type="similarity">
    <text evidence="5">Belongs to the TGF-beta family. GDNF subfamily.</text>
</comment>
<dbReference type="EMBL" id="U78109">
    <property type="protein sequence ID" value="AAC52954.1"/>
    <property type="molecule type" value="mRNA"/>
</dbReference>
<dbReference type="EMBL" id="BC057993">
    <property type="protein sequence ID" value="AAH57993.1"/>
    <property type="molecule type" value="mRNA"/>
</dbReference>
<dbReference type="CCDS" id="CCDS28913.1"/>
<dbReference type="RefSeq" id="NP_032764.1">
    <property type="nucleotide sequence ID" value="NM_008738.4"/>
</dbReference>
<dbReference type="RefSeq" id="XP_006523864.1">
    <property type="nucleotide sequence ID" value="XM_006523801.3"/>
</dbReference>
<dbReference type="SMR" id="P97463"/>
<dbReference type="BioGRID" id="201850">
    <property type="interactions" value="1"/>
</dbReference>
<dbReference type="FunCoup" id="P97463">
    <property type="interactions" value="332"/>
</dbReference>
<dbReference type="STRING" id="10090.ENSMUSP00000046512"/>
<dbReference type="iPTMnet" id="P97463"/>
<dbReference type="PhosphoSitePlus" id="P97463"/>
<dbReference type="PaxDb" id="10090-ENSMUSP00000046512"/>
<dbReference type="ProteomicsDB" id="293897"/>
<dbReference type="Antibodypedia" id="11762">
    <property type="antibodies" value="475 antibodies from 39 providers"/>
</dbReference>
<dbReference type="DNASU" id="18188"/>
<dbReference type="Ensembl" id="ENSMUST00000044752.6">
    <property type="protein sequence ID" value="ENSMUSP00000046512.6"/>
    <property type="gene ID" value="ENSMUSG00000039481.6"/>
</dbReference>
<dbReference type="GeneID" id="18188"/>
<dbReference type="KEGG" id="mmu:18188"/>
<dbReference type="UCSC" id="uc008ddc.1">
    <property type="organism name" value="mouse"/>
</dbReference>
<dbReference type="AGR" id="MGI:108417"/>
<dbReference type="CTD" id="4902"/>
<dbReference type="MGI" id="MGI:108417">
    <property type="gene designation" value="Nrtn"/>
</dbReference>
<dbReference type="VEuPathDB" id="HostDB:ENSMUSG00000039481"/>
<dbReference type="eggNOG" id="ENOG502QWH4">
    <property type="taxonomic scope" value="Eukaryota"/>
</dbReference>
<dbReference type="GeneTree" id="ENSGT00950000182993"/>
<dbReference type="HOGENOM" id="CLU_102221_1_1_1"/>
<dbReference type="InParanoid" id="P97463"/>
<dbReference type="OMA" id="NQARRTK"/>
<dbReference type="OrthoDB" id="9936891at2759"/>
<dbReference type="PhylomeDB" id="P97463"/>
<dbReference type="TreeFam" id="TF332366"/>
<dbReference type="Reactome" id="R-MMU-5673001">
    <property type="pathway name" value="RAF/MAP kinase cascade"/>
</dbReference>
<dbReference type="Reactome" id="R-MMU-8853659">
    <property type="pathway name" value="RET signaling"/>
</dbReference>
<dbReference type="BioGRID-ORCS" id="18188">
    <property type="hits" value="2 hits in 76 CRISPR screens"/>
</dbReference>
<dbReference type="PRO" id="PR:P97463"/>
<dbReference type="Proteomes" id="UP000000589">
    <property type="component" value="Chromosome 17"/>
</dbReference>
<dbReference type="RNAct" id="P97463">
    <property type="molecule type" value="protein"/>
</dbReference>
<dbReference type="Bgee" id="ENSMUSG00000039481">
    <property type="expression patterns" value="Expressed in vestibular membrane of cochlear duct and 123 other cell types or tissues"/>
</dbReference>
<dbReference type="GO" id="GO:0005615">
    <property type="term" value="C:extracellular space"/>
    <property type="evidence" value="ECO:0000314"/>
    <property type="project" value="UniProtKB"/>
</dbReference>
<dbReference type="GO" id="GO:0030116">
    <property type="term" value="F:glial cell-derived neurotrophic factor receptor binding"/>
    <property type="evidence" value="ECO:0007669"/>
    <property type="project" value="InterPro"/>
</dbReference>
<dbReference type="GO" id="GO:0008083">
    <property type="term" value="F:growth factor activity"/>
    <property type="evidence" value="ECO:0000314"/>
    <property type="project" value="UniProtKB"/>
</dbReference>
<dbReference type="GO" id="GO:1904399">
    <property type="term" value="F:heparan sulfate binding"/>
    <property type="evidence" value="ECO:0000250"/>
    <property type="project" value="UniProtKB"/>
</dbReference>
<dbReference type="GO" id="GO:0030971">
    <property type="term" value="F:receptor tyrosine kinase binding"/>
    <property type="evidence" value="ECO:0007669"/>
    <property type="project" value="InterPro"/>
</dbReference>
<dbReference type="GO" id="GO:0007169">
    <property type="term" value="P:cell surface receptor protein tyrosine kinase signaling pathway"/>
    <property type="evidence" value="ECO:0000316"/>
    <property type="project" value="MGI"/>
</dbReference>
<dbReference type="GO" id="GO:0097696">
    <property type="term" value="P:cell surface receptor signaling pathway via STAT"/>
    <property type="evidence" value="ECO:0000314"/>
    <property type="project" value="MGI"/>
</dbReference>
<dbReference type="GO" id="GO:0035860">
    <property type="term" value="P:glial cell-derived neurotrophic factor receptor signaling pathway"/>
    <property type="evidence" value="ECO:0000314"/>
    <property type="project" value="UniProtKB"/>
</dbReference>
<dbReference type="GO" id="GO:0021675">
    <property type="term" value="P:nerve development"/>
    <property type="evidence" value="ECO:0000315"/>
    <property type="project" value="MGI"/>
</dbReference>
<dbReference type="GO" id="GO:0001755">
    <property type="term" value="P:neural crest cell migration"/>
    <property type="evidence" value="ECO:0000266"/>
    <property type="project" value="MGI"/>
</dbReference>
<dbReference type="GO" id="GO:0031175">
    <property type="term" value="P:neuron projection development"/>
    <property type="evidence" value="ECO:0000266"/>
    <property type="project" value="MGI"/>
</dbReference>
<dbReference type="CDD" id="cd19383">
    <property type="entry name" value="TGF_beta_Neurturin"/>
    <property type="match status" value="1"/>
</dbReference>
<dbReference type="FunFam" id="2.10.90.10:FF:000037">
    <property type="entry name" value="neurturin"/>
    <property type="match status" value="1"/>
</dbReference>
<dbReference type="Gene3D" id="2.10.90.10">
    <property type="entry name" value="Cystine-knot cytokines"/>
    <property type="match status" value="1"/>
</dbReference>
<dbReference type="InterPro" id="IPR029034">
    <property type="entry name" value="Cystine-knot_cytokine"/>
</dbReference>
<dbReference type="InterPro" id="IPR043401">
    <property type="entry name" value="GDNF_fam"/>
</dbReference>
<dbReference type="InterPro" id="IPR001839">
    <property type="entry name" value="TGF-b_C"/>
</dbReference>
<dbReference type="PANTHER" id="PTHR12173">
    <property type="entry name" value="GDNF SUBFAMILY OF TGF-BETA FAMILY"/>
    <property type="match status" value="1"/>
</dbReference>
<dbReference type="PANTHER" id="PTHR12173:SF3">
    <property type="entry name" value="NEURTURIN"/>
    <property type="match status" value="1"/>
</dbReference>
<dbReference type="Pfam" id="PF00019">
    <property type="entry name" value="TGF_beta"/>
    <property type="match status" value="1"/>
</dbReference>
<dbReference type="SUPFAM" id="SSF57501">
    <property type="entry name" value="Cystine-knot cytokines"/>
    <property type="match status" value="1"/>
</dbReference>
<dbReference type="PROSITE" id="PS51362">
    <property type="entry name" value="TGF_BETA_2"/>
    <property type="match status" value="1"/>
</dbReference>
<sequence>MRRWKAAALVSLICSSLLSVWMCQEGLLLGHRLGPALAPLRRPPRTLDARIARLAQYRALLQGAPDAVELRELSPWAARIPGPRRRAGPRRRRARPGARPCGLRELEVRVSELGLGYTSDETVLFRYCAGACEAAIRIYDLGLRRLRQRRRVRRERARAHPCCRPTAYEDEVSFLDVHSRYHTLQELSARECACV</sequence>